<dbReference type="EMBL" id="BC062886">
    <property type="protein sequence ID" value="AAH62886.1"/>
    <property type="molecule type" value="mRNA"/>
</dbReference>
<dbReference type="EMBL" id="BC034670">
    <property type="protein sequence ID" value="AAH34670.1"/>
    <property type="molecule type" value="mRNA"/>
</dbReference>
<dbReference type="CCDS" id="CCDS29453.1"/>
<dbReference type="RefSeq" id="NP_694769.2">
    <property type="nucleotide sequence ID" value="NM_153129.2"/>
</dbReference>
<dbReference type="BioGRID" id="223732">
    <property type="interactions" value="16"/>
</dbReference>
<dbReference type="FunCoup" id="Q8K212">
    <property type="interactions" value="2418"/>
</dbReference>
<dbReference type="IntAct" id="Q8K212">
    <property type="interactions" value="2"/>
</dbReference>
<dbReference type="MINT" id="Q8K212"/>
<dbReference type="STRING" id="10090.ENSMUSP00000025786"/>
<dbReference type="GlyGen" id="Q8K212">
    <property type="glycosylation" value="3 sites, 1 N-linked glycan (1 site), 1 O-linked glycan (1 site)"/>
</dbReference>
<dbReference type="iPTMnet" id="Q8K212"/>
<dbReference type="MetOSite" id="Q8K212"/>
<dbReference type="PhosphoSitePlus" id="Q8K212"/>
<dbReference type="SwissPalm" id="Q8K212"/>
<dbReference type="jPOST" id="Q8K212"/>
<dbReference type="PaxDb" id="10090-ENSMUSP00000025786"/>
<dbReference type="PeptideAtlas" id="Q8K212"/>
<dbReference type="ProteomicsDB" id="287763"/>
<dbReference type="Pumba" id="Q8K212"/>
<dbReference type="Antibodypedia" id="44366">
    <property type="antibodies" value="95 antibodies from 27 providers"/>
</dbReference>
<dbReference type="DNASU" id="107975"/>
<dbReference type="Ensembl" id="ENSMUST00000025786.9">
    <property type="protein sequence ID" value="ENSMUSP00000025786.8"/>
    <property type="gene ID" value="ENSMUSG00000024855.11"/>
</dbReference>
<dbReference type="GeneID" id="107975"/>
<dbReference type="KEGG" id="mmu:107975"/>
<dbReference type="UCSC" id="uc008gci.1">
    <property type="organism name" value="mouse"/>
</dbReference>
<dbReference type="AGR" id="MGI:1277113"/>
<dbReference type="CTD" id="55690"/>
<dbReference type="MGI" id="MGI:1277113">
    <property type="gene designation" value="Pacs1"/>
</dbReference>
<dbReference type="VEuPathDB" id="HostDB:ENSMUSG00000024855"/>
<dbReference type="eggNOG" id="KOG3709">
    <property type="taxonomic scope" value="Eukaryota"/>
</dbReference>
<dbReference type="GeneTree" id="ENSGT00950000183209"/>
<dbReference type="HOGENOM" id="CLU_013074_0_0_1"/>
<dbReference type="InParanoid" id="Q8K212"/>
<dbReference type="OMA" id="TSAITRX"/>
<dbReference type="OrthoDB" id="28829at2759"/>
<dbReference type="PhylomeDB" id="Q8K212"/>
<dbReference type="TreeFam" id="TF314240"/>
<dbReference type="BioGRID-ORCS" id="107975">
    <property type="hits" value="4 hits in 76 CRISPR screens"/>
</dbReference>
<dbReference type="CD-CODE" id="CE726F99">
    <property type="entry name" value="Postsynaptic density"/>
</dbReference>
<dbReference type="ChiTaRS" id="Pacs1">
    <property type="organism name" value="mouse"/>
</dbReference>
<dbReference type="PRO" id="PR:Q8K212"/>
<dbReference type="Proteomes" id="UP000000589">
    <property type="component" value="Chromosome 19"/>
</dbReference>
<dbReference type="RNAct" id="Q8K212">
    <property type="molecule type" value="protein"/>
</dbReference>
<dbReference type="Bgee" id="ENSMUSG00000024855">
    <property type="expression patterns" value="Expressed in granulocyte and 247 other cell types or tissues"/>
</dbReference>
<dbReference type="ExpressionAtlas" id="Q8K212">
    <property type="expression patterns" value="baseline and differential"/>
</dbReference>
<dbReference type="GO" id="GO:0030137">
    <property type="term" value="C:COPI-coated vesicle"/>
    <property type="evidence" value="ECO:0000314"/>
    <property type="project" value="MGI"/>
</dbReference>
<dbReference type="GO" id="GO:0005794">
    <property type="term" value="C:Golgi apparatus"/>
    <property type="evidence" value="ECO:0007669"/>
    <property type="project" value="UniProtKB-SubCell"/>
</dbReference>
<dbReference type="GO" id="GO:0044325">
    <property type="term" value="F:transmembrane transporter binding"/>
    <property type="evidence" value="ECO:0007669"/>
    <property type="project" value="Ensembl"/>
</dbReference>
<dbReference type="GO" id="GO:0002260">
    <property type="term" value="P:lymphocyte homeostasis"/>
    <property type="evidence" value="ECO:0000315"/>
    <property type="project" value="UniProtKB"/>
</dbReference>
<dbReference type="GO" id="GO:0034067">
    <property type="term" value="P:protein localization to Golgi apparatus"/>
    <property type="evidence" value="ECO:0000314"/>
    <property type="project" value="MGI"/>
</dbReference>
<dbReference type="GO" id="GO:0072659">
    <property type="term" value="P:protein localization to plasma membrane"/>
    <property type="evidence" value="ECO:0007669"/>
    <property type="project" value="Ensembl"/>
</dbReference>
<dbReference type="InterPro" id="IPR019381">
    <property type="entry name" value="Phosphofurin_acidic_CS-1"/>
</dbReference>
<dbReference type="PANTHER" id="PTHR13280">
    <property type="entry name" value="PHOSPHOFURIN ACIDIC CLUSTER SORTING PROTEIN"/>
    <property type="match status" value="1"/>
</dbReference>
<dbReference type="PANTHER" id="PTHR13280:SF16">
    <property type="entry name" value="PHOSPHOFURIN ACIDIC CLUSTER SORTING PROTEIN 1"/>
    <property type="match status" value="1"/>
</dbReference>
<dbReference type="Pfam" id="PF25332">
    <property type="entry name" value="C2_PACS_N"/>
    <property type="match status" value="1"/>
</dbReference>
<dbReference type="Pfam" id="PF10254">
    <property type="entry name" value="Pacs-1"/>
    <property type="match status" value="1"/>
</dbReference>
<organism>
    <name type="scientific">Mus musculus</name>
    <name type="common">Mouse</name>
    <dbReference type="NCBI Taxonomy" id="10090"/>
    <lineage>
        <taxon>Eukaryota</taxon>
        <taxon>Metazoa</taxon>
        <taxon>Chordata</taxon>
        <taxon>Craniata</taxon>
        <taxon>Vertebrata</taxon>
        <taxon>Euteleostomi</taxon>
        <taxon>Mammalia</taxon>
        <taxon>Eutheria</taxon>
        <taxon>Euarchontoglires</taxon>
        <taxon>Glires</taxon>
        <taxon>Rodentia</taxon>
        <taxon>Myomorpha</taxon>
        <taxon>Muroidea</taxon>
        <taxon>Muridae</taxon>
        <taxon>Murinae</taxon>
        <taxon>Mus</taxon>
        <taxon>Mus</taxon>
    </lineage>
</organism>
<sequence length="961" mass="104829">MAERGGAGGGPGGSGGGSSQRGSGVAQSPQQQPQQQPPQPQQPTPPKLAQATSSSSSTSAAAASSSSSSTSTSMAVAVASGSAPPGGPGPGRTPAPVQMNLYATWEVDRSSSSCVPRLFSLTLKKLVMLKEMDKDLNSVVIAVKLQGSKRILRSNEIILPASGLVETELQLTFSLQYPHFLKRDANKLQIMLQRRKRYKNRTILGYKTLAVGLINMAEVMQHPNEGALVLGLHSNVKDVSVPVAEIKIYSLSSQPIDHEGIKSKLSDRSPDIDNYSEEEEESFSSEQEGSDDPLHGQDLFYEDEDLRKVKKTRRKLTSTSAITRQPNIKQKFVALLKRFKVSDEVGFGLEHVSREQIREVEEDLDELYDSLEMYNPSDSGPEMEETESILSTPKPKLKPFFEGMSQSSSQTEIGSLNSKGSLGKDTTSPMELAALEKVKSTWIKNQDDSLTETDTLEITDQDMFGDVSTSLVVPEKVKTPMKSSKADLQGSASPSKVEGTHTPRQKRSTPLKERQLSKPLSERTNSSDSERSPDLGHSTQIPRKVVYDQLNQILVSDAALPENVILVNTTDWQGQYVAELLQDQRKPVVCTCSTVEVQAVLSALLTRIQRYCNCNSSMPRPVKVAAVGSQSYLSSILRFFVKSLASKTPDWLGYMRFLIIPLGSHPVAKYLGSVDSRYSSTFLDSAWRDLFSRSEPPVSEPLDVVGRVMQYVNGATTTHQLPVAEAMLTCRHKFPDEDSYQKFIPFIGVVKVGLVEDSPSTAGDGDDSPVVSLTVPSTSPPSSSGLSRDATATPPSSPSMSSALAIVGSPNSPYGDVIGLQVDYWLGHPGERRREGDKRDASSKNTLKSVFRSVQVSRLPHAGEAQLSGTMAMTVVTKEKNKKVPTIFLSKKPREKEVDSKSQVIEGISRLICSAKQQQTMLRVSIDGVEWSDIKFFQLAAQWPTHVKHFPVGLFSGSKTT</sequence>
<name>PACS1_MOUSE</name>
<reference key="1">
    <citation type="journal article" date="2004" name="Genome Res.">
        <title>The status, quality, and expansion of the NIH full-length cDNA project: the Mammalian Gene Collection (MGC).</title>
        <authorList>
            <consortium name="The MGC Project Team"/>
        </authorList>
    </citation>
    <scope>NUCLEOTIDE SEQUENCE [LARGE SCALE MRNA]</scope>
    <source>
        <strain>C57BL/6J</strain>
        <tissue>Brain</tissue>
        <tissue>Mammary gland</tissue>
    </source>
</reference>
<reference key="2">
    <citation type="journal article" date="1998" name="Cell">
        <title>PACS-1 defines a novel gene family of cytosolic sorting proteins required for trans-Golgi network localization.</title>
        <authorList>
            <person name="Wan L."/>
            <person name="Molloy S.S."/>
            <person name="Thomas L."/>
            <person name="Liu G."/>
            <person name="Xiang Y."/>
            <person name="Rybak S.L."/>
            <person name="Thomas G."/>
        </authorList>
    </citation>
    <scope>INTERACTION WITH FURIN</scope>
</reference>
<reference key="3">
    <citation type="journal article" date="2005" name="EMBO J.">
        <title>Trafficking of TRPP2 by PACS proteins represents a novel mechanism of ion channel regulation.</title>
        <authorList>
            <person name="Koettgen M."/>
            <person name="Benzing T."/>
            <person name="Simmen T."/>
            <person name="Tauber R."/>
            <person name="Buchholz B."/>
            <person name="Feliciangeli S."/>
            <person name="Huber T.B."/>
            <person name="Schermer B."/>
            <person name="Kramer-Zucker A."/>
            <person name="Hoepker K."/>
            <person name="Simmen K.C."/>
            <person name="Tschucke C.C."/>
            <person name="Sandford R."/>
            <person name="Kim E."/>
            <person name="Thomas G."/>
            <person name="Walz G."/>
        </authorList>
    </citation>
    <scope>INTERACTION WITH PKD2</scope>
</reference>
<reference key="4">
    <citation type="journal article" date="2010" name="Cell">
        <title>A tissue-specific atlas of mouse protein phosphorylation and expression.</title>
        <authorList>
            <person name="Huttlin E.L."/>
            <person name="Jedrychowski M.P."/>
            <person name="Elias J.E."/>
            <person name="Goswami T."/>
            <person name="Rad R."/>
            <person name="Beausoleil S.A."/>
            <person name="Villen J."/>
            <person name="Haas W."/>
            <person name="Sowa M.E."/>
            <person name="Gygi S.P."/>
        </authorList>
    </citation>
    <scope>PHOSPHORYLATION [LARGE SCALE ANALYSIS] AT SER-28; THR-44; TYR-249; SER-428; SER-529 AND SER-532</scope>
    <scope>IDENTIFICATION BY MASS SPECTROMETRY [LARGE SCALE ANALYSIS]</scope>
    <source>
        <tissue>Brain</tissue>
        <tissue>Brown adipose tissue</tissue>
        <tissue>Heart</tissue>
        <tissue>Kidney</tissue>
        <tissue>Lung</tissue>
        <tissue>Pancreas</tissue>
        <tissue>Spleen</tissue>
        <tissue>Testis</tissue>
    </source>
</reference>
<reference key="5">
    <citation type="journal article" date="2021" name="EMBO J.">
        <title>Calcium flux control by Pacs1-Wdr37 promotes lymphocyte quiescence and lymphoproliferative diseases.</title>
        <authorList>
            <person name="Nair-Gill E."/>
            <person name="Bonora M."/>
            <person name="Zhong X."/>
            <person name="Liu A."/>
            <person name="Miranda A."/>
            <person name="Stewart N."/>
            <person name="Ludwig S."/>
            <person name="Russell J."/>
            <person name="Gallagher T."/>
            <person name="Pinton P."/>
            <person name="Beutler B."/>
        </authorList>
    </citation>
    <scope>FUNCTION</scope>
    <scope>INTERACTION WITH WDR37</scope>
    <scope>DISRUPTION PHENOTYPE</scope>
    <scope>MUTAGENESIS OF 102-TYR--THR-961 AND ASP-757</scope>
</reference>
<protein>
    <recommendedName>
        <fullName>Phosphofurin acidic cluster sorting protein 1</fullName>
        <shortName>PACS-1</shortName>
    </recommendedName>
</protein>
<keyword id="KW-0007">Acetylation</keyword>
<keyword id="KW-0175">Coiled coil</keyword>
<keyword id="KW-0333">Golgi apparatus</keyword>
<keyword id="KW-0597">Phosphoprotein</keyword>
<keyword id="KW-1185">Reference proteome</keyword>
<comment type="function">
    <text evidence="1 2 6">Coat protein that is involved in the localization of trans-Golgi network (TGN) membrane proteins that contain acidic cluster sorting motifs. Controls the endosome-to-Golgi trafficking of furin and mannose-6-phosphate receptor by connecting the acidic-cluster-containing cytoplasmic domain of these molecules with the adapter-protein complex-1 (AP-1) of endosomal clathrin-coated membrane pits (By similarity). Required for normal ER Ca2+ handling in lymphocytes. Together with WDR37, it plays an essential role in lymphocyte development, quiescence and survival. Required for stabilizing peripheral lymphocyte populations (PubMed:33630350).</text>
</comment>
<comment type="subunit">
    <text evidence="2 5 6 7">Associates with AP-1 and AP-3 but not with AP-2 complexes (By similarity). Interacts with FURIN (PubMed:9695949). Forms a ternary complex with FURIN and AP-1 (By similarity). Interacts with PKD2 (via acidic region) (PubMed:15692563). Interacts with SORL1 (By similarity). Interacts with WDR37 (PubMed:33630350).</text>
</comment>
<comment type="subcellular location">
    <subcellularLocation>
        <location evidence="1">Golgi apparatus</location>
        <location evidence="1">trans-Golgi network</location>
    </subcellularLocation>
    <text evidence="1">Localizes in the perinuclear region, probably the TGN.</text>
</comment>
<comment type="disruption phenotype">
    <text evidence="6">Mice lacking PACS1 have reduced numbers of B-cell progenitors in the bone marrow starting at the pre-B cell stage, normal numbers of developing T-cell subpopulations in the thymus, and a reduction in splenic follicular B cells. ER Ca2+ efflux in PACS1-deficient lymphocytes is defective after antigen receptor stimulation, while ER stress and sensitivity to oxidative stress are increased. B cells have reduced IP3R expression, and show spontaneous loss of quiescence evidenced by increased proliferation and apoptosis in lymphocyte-replete environments in vivo.</text>
</comment>
<comment type="similarity">
    <text evidence="8">Belongs to the PACS family.</text>
</comment>
<feature type="initiator methionine" description="Removed" evidence="2">
    <location>
        <position position="1"/>
    </location>
</feature>
<feature type="chain" id="PRO_0000058172" description="Phosphofurin acidic cluster sorting protein 1">
    <location>
        <begin position="2"/>
        <end position="961"/>
    </location>
</feature>
<feature type="region of interest" description="Disordered" evidence="4">
    <location>
        <begin position="1"/>
        <end position="70"/>
    </location>
</feature>
<feature type="region of interest" description="Disordered" evidence="4">
    <location>
        <begin position="76"/>
        <end position="95"/>
    </location>
</feature>
<feature type="region of interest" description="Disordered" evidence="4">
    <location>
        <begin position="260"/>
        <end position="297"/>
    </location>
</feature>
<feature type="region of interest" description="Disordered" evidence="4">
    <location>
        <begin position="375"/>
        <end position="426"/>
    </location>
</feature>
<feature type="region of interest" description="Disordered" evidence="4">
    <location>
        <begin position="475"/>
        <end position="540"/>
    </location>
</feature>
<feature type="region of interest" description="Disordered" evidence="4">
    <location>
        <begin position="758"/>
        <end position="802"/>
    </location>
</feature>
<feature type="coiled-coil region" evidence="3">
    <location>
        <begin position="351"/>
        <end position="375"/>
    </location>
</feature>
<feature type="compositionally biased region" description="Gly residues" evidence="4">
    <location>
        <begin position="1"/>
        <end position="19"/>
    </location>
</feature>
<feature type="compositionally biased region" description="Low complexity" evidence="4">
    <location>
        <begin position="20"/>
        <end position="34"/>
    </location>
</feature>
<feature type="compositionally biased region" description="Pro residues" evidence="4">
    <location>
        <begin position="35"/>
        <end position="46"/>
    </location>
</feature>
<feature type="compositionally biased region" description="Low complexity" evidence="4">
    <location>
        <begin position="51"/>
        <end position="70"/>
    </location>
</feature>
<feature type="compositionally biased region" description="Basic and acidic residues" evidence="4">
    <location>
        <begin position="260"/>
        <end position="271"/>
    </location>
</feature>
<feature type="compositionally biased region" description="Acidic residues" evidence="4">
    <location>
        <begin position="274"/>
        <end position="291"/>
    </location>
</feature>
<feature type="compositionally biased region" description="Polar residues" evidence="4">
    <location>
        <begin position="404"/>
        <end position="426"/>
    </location>
</feature>
<feature type="compositionally biased region" description="Low complexity" evidence="4">
    <location>
        <begin position="768"/>
        <end position="802"/>
    </location>
</feature>
<feature type="modified residue" description="N-acetylalanine" evidence="2">
    <location>
        <position position="2"/>
    </location>
</feature>
<feature type="modified residue" description="Phosphoserine" evidence="9">
    <location>
        <position position="28"/>
    </location>
</feature>
<feature type="modified residue" description="Phosphothreonine" evidence="9">
    <location>
        <position position="44"/>
    </location>
</feature>
<feature type="modified residue" description="Phosphotyrosine" evidence="9">
    <location>
        <position position="249"/>
    </location>
</feature>
<feature type="modified residue" description="Phosphoserine" evidence="2">
    <location>
        <position position="377"/>
    </location>
</feature>
<feature type="modified residue" description="Phosphoserine" evidence="2">
    <location>
        <position position="379"/>
    </location>
</feature>
<feature type="modified residue" description="Phosphoserine" evidence="9">
    <location>
        <position position="428"/>
    </location>
</feature>
<feature type="modified residue" description="Phosphoserine" evidence="2">
    <location>
        <position position="493"/>
    </location>
</feature>
<feature type="modified residue" description="Phosphothreonine" evidence="2">
    <location>
        <position position="502"/>
    </location>
</feature>
<feature type="modified residue" description="Phosphoserine" evidence="2">
    <location>
        <position position="517"/>
    </location>
</feature>
<feature type="modified residue" description="Phosphoserine" evidence="1">
    <location>
        <position position="526"/>
    </location>
</feature>
<feature type="modified residue" description="Phosphoserine" evidence="2">
    <location>
        <position position="527"/>
    </location>
</feature>
<feature type="modified residue" description="Phosphoserine" evidence="9">
    <location>
        <position position="529"/>
    </location>
</feature>
<feature type="modified residue" description="Phosphoserine" evidence="9">
    <location>
        <position position="532"/>
    </location>
</feature>
<feature type="mutagenesis site" description="In mouse mutant endive (en); reduced proportion of B cells in peripheral blood." evidence="6">
    <location>
        <begin position="102"/>
        <end position="961"/>
    </location>
</feature>
<feature type="mutagenesis site" description="In mouse mutant chicory (ccy); reduced proportion of B cells in peripheral blood." evidence="6">
    <original>D</original>
    <variation>G</variation>
    <location>
        <position position="757"/>
    </location>
</feature>
<feature type="sequence conflict" description="In Ref. 1; AAH34670." evidence="8" ref="1">
    <original>D</original>
    <variation>E</variation>
    <location>
        <position position="816"/>
    </location>
</feature>
<gene>
    <name type="primary">Pacs1</name>
</gene>
<evidence type="ECO:0000250" key="1">
    <source>
        <dbReference type="UniProtKB" id="O88588"/>
    </source>
</evidence>
<evidence type="ECO:0000250" key="2">
    <source>
        <dbReference type="UniProtKB" id="Q6VY07"/>
    </source>
</evidence>
<evidence type="ECO:0000255" key="3"/>
<evidence type="ECO:0000256" key="4">
    <source>
        <dbReference type="SAM" id="MobiDB-lite"/>
    </source>
</evidence>
<evidence type="ECO:0000269" key="5">
    <source>
    </source>
</evidence>
<evidence type="ECO:0000269" key="6">
    <source>
    </source>
</evidence>
<evidence type="ECO:0000269" key="7">
    <source>
    </source>
</evidence>
<evidence type="ECO:0000305" key="8"/>
<evidence type="ECO:0007744" key="9">
    <source>
    </source>
</evidence>
<proteinExistence type="evidence at protein level"/>
<accession>Q8K212</accession>
<accession>Q6P5H8</accession>